<dbReference type="EC" id="3.1.11.6" evidence="1"/>
<dbReference type="EMBL" id="AE017180">
    <property type="protein sequence ID" value="AAR35144.1"/>
    <property type="molecule type" value="Genomic_DNA"/>
</dbReference>
<dbReference type="RefSeq" id="NP_952817.1">
    <property type="nucleotide sequence ID" value="NC_002939.5"/>
</dbReference>
<dbReference type="RefSeq" id="WP_010942411.1">
    <property type="nucleotide sequence ID" value="NC_002939.5"/>
</dbReference>
<dbReference type="SMR" id="Q74CA7"/>
<dbReference type="FunCoup" id="Q74CA7">
    <property type="interactions" value="298"/>
</dbReference>
<dbReference type="STRING" id="243231.GSU1767"/>
<dbReference type="EnsemblBacteria" id="AAR35144">
    <property type="protein sequence ID" value="AAR35144"/>
    <property type="gene ID" value="GSU1767"/>
</dbReference>
<dbReference type="KEGG" id="gsu:GSU1767"/>
<dbReference type="PATRIC" id="fig|243231.5.peg.1806"/>
<dbReference type="eggNOG" id="COG1570">
    <property type="taxonomic scope" value="Bacteria"/>
</dbReference>
<dbReference type="HOGENOM" id="CLU_023625_3_1_7"/>
<dbReference type="InParanoid" id="Q74CA7"/>
<dbReference type="OrthoDB" id="9802795at2"/>
<dbReference type="Proteomes" id="UP000000577">
    <property type="component" value="Chromosome"/>
</dbReference>
<dbReference type="GO" id="GO:0005737">
    <property type="term" value="C:cytoplasm"/>
    <property type="evidence" value="ECO:0007669"/>
    <property type="project" value="UniProtKB-SubCell"/>
</dbReference>
<dbReference type="GO" id="GO:0009318">
    <property type="term" value="C:exodeoxyribonuclease VII complex"/>
    <property type="evidence" value="ECO:0007669"/>
    <property type="project" value="InterPro"/>
</dbReference>
<dbReference type="GO" id="GO:0008855">
    <property type="term" value="F:exodeoxyribonuclease VII activity"/>
    <property type="evidence" value="ECO:0007669"/>
    <property type="project" value="UniProtKB-UniRule"/>
</dbReference>
<dbReference type="GO" id="GO:0003676">
    <property type="term" value="F:nucleic acid binding"/>
    <property type="evidence" value="ECO:0007669"/>
    <property type="project" value="InterPro"/>
</dbReference>
<dbReference type="GO" id="GO:0006308">
    <property type="term" value="P:DNA catabolic process"/>
    <property type="evidence" value="ECO:0007669"/>
    <property type="project" value="UniProtKB-UniRule"/>
</dbReference>
<dbReference type="CDD" id="cd04489">
    <property type="entry name" value="ExoVII_LU_OBF"/>
    <property type="match status" value="1"/>
</dbReference>
<dbReference type="HAMAP" id="MF_00378">
    <property type="entry name" value="Exonuc_7_L"/>
    <property type="match status" value="1"/>
</dbReference>
<dbReference type="InterPro" id="IPR003753">
    <property type="entry name" value="Exonuc_VII_L"/>
</dbReference>
<dbReference type="InterPro" id="IPR020579">
    <property type="entry name" value="Exonuc_VII_lsu_C"/>
</dbReference>
<dbReference type="InterPro" id="IPR025824">
    <property type="entry name" value="OB-fold_nuc-bd_dom"/>
</dbReference>
<dbReference type="NCBIfam" id="TIGR00237">
    <property type="entry name" value="xseA"/>
    <property type="match status" value="1"/>
</dbReference>
<dbReference type="PANTHER" id="PTHR30008">
    <property type="entry name" value="EXODEOXYRIBONUCLEASE 7 LARGE SUBUNIT"/>
    <property type="match status" value="1"/>
</dbReference>
<dbReference type="PANTHER" id="PTHR30008:SF0">
    <property type="entry name" value="EXODEOXYRIBONUCLEASE 7 LARGE SUBUNIT"/>
    <property type="match status" value="1"/>
</dbReference>
<dbReference type="Pfam" id="PF02601">
    <property type="entry name" value="Exonuc_VII_L"/>
    <property type="match status" value="1"/>
</dbReference>
<dbReference type="Pfam" id="PF13742">
    <property type="entry name" value="tRNA_anti_2"/>
    <property type="match status" value="1"/>
</dbReference>
<proteinExistence type="inferred from homology"/>
<sequence>MDIFSEKRILTVSQLTSLIRGVLEENFEHVWVEGEVSNLATPASGHLYFTLKDGAAQIRCVMFRASSRALKFRPRDGMGLIVRGRVTVYDQRGEYQLLVEYLEPRGIGALQLAFIQLKEQLAREGLFADEHKKPIPPLPQKIGVVTSATGAAIHDILTVLNRRFANVEILIRPVKVQGEGAAEEIAAAIDDFNRYGVIDVMIVGRGGGSLEDLWAFNEEMVARAIHRSRIPVISAVGHEVDFTIADFVADLRAPTPSAAAELVVKSKEELAARLEFLRHRLVQGGRQVLAERRGELDSLNRSLRDPSMLVGHLSQRVDDLSARLERGTANSVRRHRGSLDLLTTNLRLTNPAVRLERARERVIALAGRNETLLRRFLDHLREKTLVAAARLDTLSPLATMARGYSIVLKLPERCLVTDSARLAPGDRVELCLRRGRAGCCVESSSDT</sequence>
<feature type="chain" id="PRO_1000048774" description="Exodeoxyribonuclease 7 large subunit">
    <location>
        <begin position="1"/>
        <end position="447"/>
    </location>
</feature>
<organism>
    <name type="scientific">Geobacter sulfurreducens (strain ATCC 51573 / DSM 12127 / PCA)</name>
    <dbReference type="NCBI Taxonomy" id="243231"/>
    <lineage>
        <taxon>Bacteria</taxon>
        <taxon>Pseudomonadati</taxon>
        <taxon>Thermodesulfobacteriota</taxon>
        <taxon>Desulfuromonadia</taxon>
        <taxon>Geobacterales</taxon>
        <taxon>Geobacteraceae</taxon>
        <taxon>Geobacter</taxon>
    </lineage>
</organism>
<comment type="function">
    <text evidence="1">Bidirectionally degrades single-stranded DNA into large acid-insoluble oligonucleotides, which are then degraded further into small acid-soluble oligonucleotides.</text>
</comment>
<comment type="catalytic activity">
    <reaction evidence="1">
        <text>Exonucleolytic cleavage in either 5'- to 3'- or 3'- to 5'-direction to yield nucleoside 5'-phosphates.</text>
        <dbReference type="EC" id="3.1.11.6"/>
    </reaction>
</comment>
<comment type="subunit">
    <text evidence="1">Heterooligomer composed of large and small subunits.</text>
</comment>
<comment type="subcellular location">
    <subcellularLocation>
        <location evidence="1">Cytoplasm</location>
    </subcellularLocation>
</comment>
<comment type="similarity">
    <text evidence="1">Belongs to the XseA family.</text>
</comment>
<reference key="1">
    <citation type="journal article" date="2003" name="Science">
        <title>Genome of Geobacter sulfurreducens: metal reduction in subsurface environments.</title>
        <authorList>
            <person name="Methe B.A."/>
            <person name="Nelson K.E."/>
            <person name="Eisen J.A."/>
            <person name="Paulsen I.T."/>
            <person name="Nelson W.C."/>
            <person name="Heidelberg J.F."/>
            <person name="Wu D."/>
            <person name="Wu M."/>
            <person name="Ward N.L."/>
            <person name="Beanan M.J."/>
            <person name="Dodson R.J."/>
            <person name="Madupu R."/>
            <person name="Brinkac L.M."/>
            <person name="Daugherty S.C."/>
            <person name="DeBoy R.T."/>
            <person name="Durkin A.S."/>
            <person name="Gwinn M.L."/>
            <person name="Kolonay J.F."/>
            <person name="Sullivan S.A."/>
            <person name="Haft D.H."/>
            <person name="Selengut J."/>
            <person name="Davidsen T.M."/>
            <person name="Zafar N."/>
            <person name="White O."/>
            <person name="Tran B."/>
            <person name="Romero C."/>
            <person name="Forberger H.A."/>
            <person name="Weidman J.F."/>
            <person name="Khouri H.M."/>
            <person name="Feldblyum T.V."/>
            <person name="Utterback T.R."/>
            <person name="Van Aken S.E."/>
            <person name="Lovley D.R."/>
            <person name="Fraser C.M."/>
        </authorList>
    </citation>
    <scope>NUCLEOTIDE SEQUENCE [LARGE SCALE GENOMIC DNA]</scope>
    <source>
        <strain>ATCC 51573 / DSM 12127 / PCA</strain>
    </source>
</reference>
<gene>
    <name evidence="1" type="primary">xseA</name>
    <name type="ordered locus">GSU1767</name>
</gene>
<protein>
    <recommendedName>
        <fullName evidence="1">Exodeoxyribonuclease 7 large subunit</fullName>
        <ecNumber evidence="1">3.1.11.6</ecNumber>
    </recommendedName>
    <alternativeName>
        <fullName evidence="1">Exodeoxyribonuclease VII large subunit</fullName>
        <shortName evidence="1">Exonuclease VII large subunit</shortName>
    </alternativeName>
</protein>
<evidence type="ECO:0000255" key="1">
    <source>
        <dbReference type="HAMAP-Rule" id="MF_00378"/>
    </source>
</evidence>
<accession>Q74CA7</accession>
<keyword id="KW-0963">Cytoplasm</keyword>
<keyword id="KW-0269">Exonuclease</keyword>
<keyword id="KW-0378">Hydrolase</keyword>
<keyword id="KW-0540">Nuclease</keyword>
<keyword id="KW-1185">Reference proteome</keyword>
<name>EX7L_GEOSL</name>